<evidence type="ECO:0000250" key="1"/>
<evidence type="ECO:0000255" key="2"/>
<evidence type="ECO:0000305" key="3"/>
<accession>Q9USN0</accession>
<proteinExistence type="inferred from homology"/>
<protein>
    <recommendedName>
        <fullName>GPI mannosyltransferase 3</fullName>
        <ecNumber>2.4.1.-</ecNumber>
    </recommendedName>
    <alternativeName>
        <fullName>GPI mannosyltransferase III</fullName>
        <shortName>GPI-MT-III</shortName>
    </alternativeName>
    <alternativeName>
        <fullName>Glycosylphosphatidylinositol-anchor biosynthesis protein 10</fullName>
    </alternativeName>
</protein>
<name>GPI10_SCHPO</name>
<gene>
    <name type="primary">gpi10</name>
    <name type="ORF">SPCC16A11.06c</name>
</gene>
<comment type="function">
    <text evidence="1">Mannosyltransferase involved in glycosylphosphatidylinositol-anchor biosynthesis. Transfers the third mannose to Man2-GlcN-acyl-PI during GPI precursor assembly (By similarity).</text>
</comment>
<comment type="pathway">
    <text>Glycolipid biosynthesis; glycosylphosphatidylinositol-anchor biosynthesis.</text>
</comment>
<comment type="subcellular location">
    <subcellularLocation>
        <location evidence="1">Endoplasmic reticulum membrane</location>
        <topology evidence="1">Multi-pass membrane protein</topology>
    </subcellularLocation>
</comment>
<comment type="similarity">
    <text evidence="3">Belongs to the glycosyltransferase 22 family. PIGB subfamily.</text>
</comment>
<dbReference type="EC" id="2.4.1.-"/>
<dbReference type="EMBL" id="CU329672">
    <property type="protein sequence ID" value="CAB53078.1"/>
    <property type="molecule type" value="Genomic_DNA"/>
</dbReference>
<dbReference type="PIR" id="T41079">
    <property type="entry name" value="T41079"/>
</dbReference>
<dbReference type="RefSeq" id="NP_587993.1">
    <property type="nucleotide sequence ID" value="NM_001022984.2"/>
</dbReference>
<dbReference type="BioGRID" id="275724">
    <property type="interactions" value="2"/>
</dbReference>
<dbReference type="FunCoup" id="Q9USN0">
    <property type="interactions" value="582"/>
</dbReference>
<dbReference type="STRING" id="284812.Q9USN0"/>
<dbReference type="CAZy" id="GT22">
    <property type="family name" value="Glycosyltransferase Family 22"/>
</dbReference>
<dbReference type="GlyCosmos" id="Q9USN0">
    <property type="glycosylation" value="2 sites, No reported glycans"/>
</dbReference>
<dbReference type="PaxDb" id="4896-SPCC16A11.06c.1"/>
<dbReference type="EnsemblFungi" id="SPCC16A11.06c.1">
    <property type="protein sequence ID" value="SPCC16A11.06c.1:pep"/>
    <property type="gene ID" value="SPCC16A11.06c"/>
</dbReference>
<dbReference type="GeneID" id="2539152"/>
<dbReference type="KEGG" id="spo:2539152"/>
<dbReference type="PomBase" id="SPCC16A11.06c">
    <property type="gene designation" value="gpi10"/>
</dbReference>
<dbReference type="VEuPathDB" id="FungiDB:SPCC16A11.06c"/>
<dbReference type="eggNOG" id="KOG1771">
    <property type="taxonomic scope" value="Eukaryota"/>
</dbReference>
<dbReference type="HOGENOM" id="CLU_012353_2_0_1"/>
<dbReference type="InParanoid" id="Q9USN0"/>
<dbReference type="OMA" id="HHMVFNN"/>
<dbReference type="PhylomeDB" id="Q9USN0"/>
<dbReference type="Reactome" id="R-SPO-162710">
    <property type="pathway name" value="Synthesis of glycosylphosphatidylinositol (GPI)"/>
</dbReference>
<dbReference type="UniPathway" id="UPA00196"/>
<dbReference type="PRO" id="PR:Q9USN0"/>
<dbReference type="Proteomes" id="UP000002485">
    <property type="component" value="Chromosome III"/>
</dbReference>
<dbReference type="GO" id="GO:0005783">
    <property type="term" value="C:endoplasmic reticulum"/>
    <property type="evidence" value="ECO:0007005"/>
    <property type="project" value="PomBase"/>
</dbReference>
<dbReference type="GO" id="GO:0005789">
    <property type="term" value="C:endoplasmic reticulum membrane"/>
    <property type="evidence" value="ECO:0000318"/>
    <property type="project" value="GO_Central"/>
</dbReference>
<dbReference type="GO" id="GO:0000026">
    <property type="term" value="F:alpha-1,2-mannosyltransferase activity"/>
    <property type="evidence" value="ECO:0000318"/>
    <property type="project" value="GO_Central"/>
</dbReference>
<dbReference type="GO" id="GO:0006506">
    <property type="term" value="P:GPI anchor biosynthetic process"/>
    <property type="evidence" value="ECO:0000318"/>
    <property type="project" value="GO_Central"/>
</dbReference>
<dbReference type="InterPro" id="IPR005599">
    <property type="entry name" value="GPI_mannosylTrfase"/>
</dbReference>
<dbReference type="PANTHER" id="PTHR22760">
    <property type="entry name" value="GLYCOSYLTRANSFERASE"/>
    <property type="match status" value="1"/>
</dbReference>
<dbReference type="PANTHER" id="PTHR22760:SF4">
    <property type="entry name" value="GPI MANNOSYLTRANSFERASE 3"/>
    <property type="match status" value="1"/>
</dbReference>
<dbReference type="Pfam" id="PF03901">
    <property type="entry name" value="Glyco_transf_22"/>
    <property type="match status" value="1"/>
</dbReference>
<keyword id="KW-0256">Endoplasmic reticulum</keyword>
<keyword id="KW-0325">Glycoprotein</keyword>
<keyword id="KW-0328">Glycosyltransferase</keyword>
<keyword id="KW-0337">GPI-anchor biosynthesis</keyword>
<keyword id="KW-0472">Membrane</keyword>
<keyword id="KW-1185">Reference proteome</keyword>
<keyword id="KW-0808">Transferase</keyword>
<keyword id="KW-0812">Transmembrane</keyword>
<keyword id="KW-1133">Transmembrane helix</keyword>
<organism>
    <name type="scientific">Schizosaccharomyces pombe (strain 972 / ATCC 24843)</name>
    <name type="common">Fission yeast</name>
    <dbReference type="NCBI Taxonomy" id="284812"/>
    <lineage>
        <taxon>Eukaryota</taxon>
        <taxon>Fungi</taxon>
        <taxon>Dikarya</taxon>
        <taxon>Ascomycota</taxon>
        <taxon>Taphrinomycotina</taxon>
        <taxon>Schizosaccharomycetes</taxon>
        <taxon>Schizosaccharomycetales</taxon>
        <taxon>Schizosaccharomycetaceae</taxon>
        <taxon>Schizosaccharomyces</taxon>
    </lineage>
</organism>
<sequence>MRIWFWLAILVFRWWNALWVKTFFQPDEFYQSLEVAHHFIFRYGFLTWEWTSAIRSALHPLIFAALYRVLQVLKLDSSYFVFTNAPKLLQGTFAAILDYGTYKFALVRYGSKTANWTLACSLVSIMNAYVGVRTFSNSLETTLTSIGFYYFSYYLKYENSSPEQRKKAYSSLLGFISVAAFACFIRPTNILVWIFPLLFWNKNPQTPIKDLLSFSNVFNRFRFLYALGYGRLFGIFVLCVSLFLVNIIADRILYGRFVFPIISFFQFNVTSGLSSLYGLNAWHYYLSQALPLICGGFLPFVLLTMDLQTAGTILCVFFPYSLIGHKELRFVYPISPILLTLAGKFFSSFSSWKRAARFFFLIGLGHALVITFLCRFHQFGVMEVMPLIHSLAEKNQTGLILAPCHTTPWQSHIHSPFAENGWKFLTCEPFEKPFDETDRFYENMPTFLDKIKEWPDYLIFFEERFYSLYSYLDSRGLKYEEVQRYYNSLIPESRERAGALLVYKKL</sequence>
<feature type="chain" id="PRO_0000246266" description="GPI mannosyltransferase 3">
    <location>
        <begin position="1"/>
        <end position="506"/>
    </location>
</feature>
<feature type="transmembrane region" description="Helical" evidence="2">
    <location>
        <begin position="180"/>
        <end position="200"/>
    </location>
</feature>
<feature type="transmembrane region" description="Helical" evidence="2">
    <location>
        <begin position="229"/>
        <end position="249"/>
    </location>
</feature>
<feature type="transmembrane region" description="Helical" evidence="2">
    <location>
        <begin position="257"/>
        <end position="277"/>
    </location>
</feature>
<feature type="transmembrane region" description="Helical" evidence="2">
    <location>
        <begin position="285"/>
        <end position="305"/>
    </location>
</feature>
<feature type="transmembrane region" description="Helical" evidence="2">
    <location>
        <begin position="330"/>
        <end position="350"/>
    </location>
</feature>
<feature type="transmembrane region" description="Helical" evidence="2">
    <location>
        <begin position="358"/>
        <end position="378"/>
    </location>
</feature>
<feature type="glycosylation site" description="N-linked (GlcNAc...) asparagine" evidence="2">
    <location>
        <position position="115"/>
    </location>
</feature>
<feature type="glycosylation site" description="N-linked (GlcNAc...) asparagine" evidence="2">
    <location>
        <position position="395"/>
    </location>
</feature>
<reference key="1">
    <citation type="journal article" date="2002" name="Nature">
        <title>The genome sequence of Schizosaccharomyces pombe.</title>
        <authorList>
            <person name="Wood V."/>
            <person name="Gwilliam R."/>
            <person name="Rajandream M.A."/>
            <person name="Lyne M.H."/>
            <person name="Lyne R."/>
            <person name="Stewart A."/>
            <person name="Sgouros J.G."/>
            <person name="Peat N."/>
            <person name="Hayles J."/>
            <person name="Baker S.G."/>
            <person name="Basham D."/>
            <person name="Bowman S."/>
            <person name="Brooks K."/>
            <person name="Brown D."/>
            <person name="Brown S."/>
            <person name="Chillingworth T."/>
            <person name="Churcher C.M."/>
            <person name="Collins M."/>
            <person name="Connor R."/>
            <person name="Cronin A."/>
            <person name="Davis P."/>
            <person name="Feltwell T."/>
            <person name="Fraser A."/>
            <person name="Gentles S."/>
            <person name="Goble A."/>
            <person name="Hamlin N."/>
            <person name="Harris D.E."/>
            <person name="Hidalgo J."/>
            <person name="Hodgson G."/>
            <person name="Holroyd S."/>
            <person name="Hornsby T."/>
            <person name="Howarth S."/>
            <person name="Huckle E.J."/>
            <person name="Hunt S."/>
            <person name="Jagels K."/>
            <person name="James K.D."/>
            <person name="Jones L."/>
            <person name="Jones M."/>
            <person name="Leather S."/>
            <person name="McDonald S."/>
            <person name="McLean J."/>
            <person name="Mooney P."/>
            <person name="Moule S."/>
            <person name="Mungall K.L."/>
            <person name="Murphy L.D."/>
            <person name="Niblett D."/>
            <person name="Odell C."/>
            <person name="Oliver K."/>
            <person name="O'Neil S."/>
            <person name="Pearson D."/>
            <person name="Quail M.A."/>
            <person name="Rabbinowitsch E."/>
            <person name="Rutherford K.M."/>
            <person name="Rutter S."/>
            <person name="Saunders D."/>
            <person name="Seeger K."/>
            <person name="Sharp S."/>
            <person name="Skelton J."/>
            <person name="Simmonds M.N."/>
            <person name="Squares R."/>
            <person name="Squares S."/>
            <person name="Stevens K."/>
            <person name="Taylor K."/>
            <person name="Taylor R.G."/>
            <person name="Tivey A."/>
            <person name="Walsh S.V."/>
            <person name="Warren T."/>
            <person name="Whitehead S."/>
            <person name="Woodward J.R."/>
            <person name="Volckaert G."/>
            <person name="Aert R."/>
            <person name="Robben J."/>
            <person name="Grymonprez B."/>
            <person name="Weltjens I."/>
            <person name="Vanstreels E."/>
            <person name="Rieger M."/>
            <person name="Schaefer M."/>
            <person name="Mueller-Auer S."/>
            <person name="Gabel C."/>
            <person name="Fuchs M."/>
            <person name="Duesterhoeft A."/>
            <person name="Fritzc C."/>
            <person name="Holzer E."/>
            <person name="Moestl D."/>
            <person name="Hilbert H."/>
            <person name="Borzym K."/>
            <person name="Langer I."/>
            <person name="Beck A."/>
            <person name="Lehrach H."/>
            <person name="Reinhardt R."/>
            <person name="Pohl T.M."/>
            <person name="Eger P."/>
            <person name="Zimmermann W."/>
            <person name="Wedler H."/>
            <person name="Wambutt R."/>
            <person name="Purnelle B."/>
            <person name="Goffeau A."/>
            <person name="Cadieu E."/>
            <person name="Dreano S."/>
            <person name="Gloux S."/>
            <person name="Lelaure V."/>
            <person name="Mottier S."/>
            <person name="Galibert F."/>
            <person name="Aves S.J."/>
            <person name="Xiang Z."/>
            <person name="Hunt C."/>
            <person name="Moore K."/>
            <person name="Hurst S.M."/>
            <person name="Lucas M."/>
            <person name="Rochet M."/>
            <person name="Gaillardin C."/>
            <person name="Tallada V.A."/>
            <person name="Garzon A."/>
            <person name="Thode G."/>
            <person name="Daga R.R."/>
            <person name="Cruzado L."/>
            <person name="Jimenez J."/>
            <person name="Sanchez M."/>
            <person name="del Rey F."/>
            <person name="Benito J."/>
            <person name="Dominguez A."/>
            <person name="Revuelta J.L."/>
            <person name="Moreno S."/>
            <person name="Armstrong J."/>
            <person name="Forsburg S.L."/>
            <person name="Cerutti L."/>
            <person name="Lowe T."/>
            <person name="McCombie W.R."/>
            <person name="Paulsen I."/>
            <person name="Potashkin J."/>
            <person name="Shpakovski G.V."/>
            <person name="Ussery D."/>
            <person name="Barrell B.G."/>
            <person name="Nurse P."/>
        </authorList>
    </citation>
    <scope>NUCLEOTIDE SEQUENCE [LARGE SCALE GENOMIC DNA]</scope>
    <source>
        <strain>972 / ATCC 24843</strain>
    </source>
</reference>